<keyword id="KW-0067">ATP-binding</keyword>
<keyword id="KW-0963">Cytoplasm</keyword>
<keyword id="KW-0235">DNA replication</keyword>
<keyword id="KW-0238">DNA-binding</keyword>
<keyword id="KW-0446">Lipid-binding</keyword>
<keyword id="KW-0547">Nucleotide-binding</keyword>
<keyword id="KW-1185">Reference proteome</keyword>
<protein>
    <recommendedName>
        <fullName evidence="1">Chromosomal replication initiator protein DnaA</fullName>
    </recommendedName>
</protein>
<proteinExistence type="inferred from homology"/>
<accession>Q5Z3Z8</accession>
<sequence length="662" mass="73440">MDDEQNVLATVWPEVIAELTTGSADGSIPAVTRAQQAWLKLVKPITVAQGFALLSVPSSLAQEAIERDLREPILRSLGRRLGPQVEGLGVRIAAPATPTAERAAANPRHARMTSRPERPRGERPVPGLPGQEAVDRPETLPRYSQAAESVPGYPARQDHSRPGDYPPAAEYTPAAEYTPAAEYTPAAEYSPEPEYTPATDYPGADDYPTTVFRLPPGGFAEPPGDGRPGGVPEISTPRRDGHGPRRDATPPGQEALFTPEPGDRPLRDTDRPLREPAAGHDVRESDGPVERDDEPVVNIRDSWPTYFAKNQESTPAPANSSASLNAKYTFETFVIGASNRFAHAAAVAIAEAPARAYNPLFVWGASGLGKTHLLHAAGHYAQRLFPGMRVKYVSTEEFTNDFINSLRDDRKVAFKRRYRETDILLVDDIQFIEGKEGIQEEFFHTFNTLHNANKQIVVSSDRPPKQLATLEERLRTRFEWGLITDVQPPELETRIAILRKKARMDRLDVPHDVLELIASRVERNIRELEGALIRVTAFASLNGQPLDLSLAEVVLRDLMPDTATLEINAATIMAVTAEYFNTTLEELTGPGKARPLAQARQIAMYLCRELTDLSLPKIGQAFGRDHTTVMYAEKKVRKEMTERRRVYDQVQELTARIKQRSR</sequence>
<gene>
    <name evidence="1" type="primary">dnaA</name>
    <name type="ordered locus">NFA_10</name>
</gene>
<feature type="chain" id="PRO_0000114223" description="Chromosomal replication initiator protein DnaA">
    <location>
        <begin position="1"/>
        <end position="662"/>
    </location>
</feature>
<feature type="region of interest" description="Domain I, interacts with DnaA modulators" evidence="1">
    <location>
        <begin position="1"/>
        <end position="93"/>
    </location>
</feature>
<feature type="region of interest" description="Domain II" evidence="1">
    <location>
        <begin position="93"/>
        <end position="322"/>
    </location>
</feature>
<feature type="region of interest" description="Disordered" evidence="2">
    <location>
        <begin position="96"/>
        <end position="294"/>
    </location>
</feature>
<feature type="region of interest" description="Domain III, AAA+ region" evidence="1">
    <location>
        <begin position="323"/>
        <end position="539"/>
    </location>
</feature>
<feature type="region of interest" description="Domain IV, binds dsDNA" evidence="1">
    <location>
        <begin position="540"/>
        <end position="662"/>
    </location>
</feature>
<feature type="compositionally biased region" description="Low complexity" evidence="2">
    <location>
        <begin position="96"/>
        <end position="105"/>
    </location>
</feature>
<feature type="compositionally biased region" description="Basic and acidic residues" evidence="2">
    <location>
        <begin position="114"/>
        <end position="123"/>
    </location>
</feature>
<feature type="compositionally biased region" description="Low complexity" evidence="2">
    <location>
        <begin position="166"/>
        <end position="199"/>
    </location>
</feature>
<feature type="compositionally biased region" description="Basic and acidic residues" evidence="2">
    <location>
        <begin position="236"/>
        <end position="248"/>
    </location>
</feature>
<feature type="compositionally biased region" description="Basic and acidic residues" evidence="2">
    <location>
        <begin position="261"/>
        <end position="290"/>
    </location>
</feature>
<feature type="binding site" evidence="1">
    <location>
        <position position="367"/>
    </location>
    <ligand>
        <name>ATP</name>
        <dbReference type="ChEBI" id="CHEBI:30616"/>
    </ligand>
</feature>
<feature type="binding site" evidence="1">
    <location>
        <position position="369"/>
    </location>
    <ligand>
        <name>ATP</name>
        <dbReference type="ChEBI" id="CHEBI:30616"/>
    </ligand>
</feature>
<feature type="binding site" evidence="1">
    <location>
        <position position="370"/>
    </location>
    <ligand>
        <name>ATP</name>
        <dbReference type="ChEBI" id="CHEBI:30616"/>
    </ligand>
</feature>
<feature type="binding site" evidence="1">
    <location>
        <position position="371"/>
    </location>
    <ligand>
        <name>ATP</name>
        <dbReference type="ChEBI" id="CHEBI:30616"/>
    </ligand>
</feature>
<comment type="function">
    <text evidence="1">Plays an essential role in the initiation and regulation of chromosomal replication. ATP-DnaA binds to the origin of replication (oriC) to initiate formation of the DNA replication initiation complex once per cell cycle. Binds the DnaA box (a 9 base pair repeat at the origin) and separates the double-stranded (ds)DNA. Forms a right-handed helical filament on oriC DNA; dsDNA binds to the exterior of the filament while single-stranded (ss)DNA is stabiized in the filament's interior. The ATP-DnaA-oriC complex binds and stabilizes one strand of the AT-rich DNA unwinding element (DUE), permitting loading of DNA polymerase. After initiation quickly degrades to an ADP-DnaA complex that is not apt for DNA replication. Binds acidic phospholipids.</text>
</comment>
<comment type="subunit">
    <text evidence="1">Oligomerizes as a right-handed, spiral filament on DNA at oriC.</text>
</comment>
<comment type="subcellular location">
    <subcellularLocation>
        <location evidence="1">Cytoplasm</location>
    </subcellularLocation>
</comment>
<comment type="domain">
    <text evidence="1">Domain I is involved in oligomerization and binding regulators, domain II is flexibile and of varying length in different bacteria, domain III forms the AAA+ region, while domain IV binds dsDNA.</text>
</comment>
<comment type="similarity">
    <text evidence="1">Belongs to the DnaA family.</text>
</comment>
<organism>
    <name type="scientific">Nocardia farcinica (strain IFM 10152)</name>
    <dbReference type="NCBI Taxonomy" id="247156"/>
    <lineage>
        <taxon>Bacteria</taxon>
        <taxon>Bacillati</taxon>
        <taxon>Actinomycetota</taxon>
        <taxon>Actinomycetes</taxon>
        <taxon>Mycobacteriales</taxon>
        <taxon>Nocardiaceae</taxon>
        <taxon>Nocardia</taxon>
    </lineage>
</organism>
<dbReference type="EMBL" id="AP006618">
    <property type="protein sequence ID" value="BAD54843.1"/>
    <property type="molecule type" value="Genomic_DNA"/>
</dbReference>
<dbReference type="RefSeq" id="WP_011206530.1">
    <property type="nucleotide sequence ID" value="NC_006361.1"/>
</dbReference>
<dbReference type="SMR" id="Q5Z3Z8"/>
<dbReference type="STRING" id="247156.NFA_10"/>
<dbReference type="GeneID" id="61130859"/>
<dbReference type="KEGG" id="nfa:NFA_10"/>
<dbReference type="eggNOG" id="COG0593">
    <property type="taxonomic scope" value="Bacteria"/>
</dbReference>
<dbReference type="HOGENOM" id="CLU_026910_2_0_11"/>
<dbReference type="OrthoDB" id="9807019at2"/>
<dbReference type="Proteomes" id="UP000006820">
    <property type="component" value="Chromosome"/>
</dbReference>
<dbReference type="GO" id="GO:0005737">
    <property type="term" value="C:cytoplasm"/>
    <property type="evidence" value="ECO:0007669"/>
    <property type="project" value="UniProtKB-SubCell"/>
</dbReference>
<dbReference type="GO" id="GO:0005886">
    <property type="term" value="C:plasma membrane"/>
    <property type="evidence" value="ECO:0007669"/>
    <property type="project" value="TreeGrafter"/>
</dbReference>
<dbReference type="GO" id="GO:0005524">
    <property type="term" value="F:ATP binding"/>
    <property type="evidence" value="ECO:0007669"/>
    <property type="project" value="UniProtKB-UniRule"/>
</dbReference>
<dbReference type="GO" id="GO:0016887">
    <property type="term" value="F:ATP hydrolysis activity"/>
    <property type="evidence" value="ECO:0007669"/>
    <property type="project" value="InterPro"/>
</dbReference>
<dbReference type="GO" id="GO:0003688">
    <property type="term" value="F:DNA replication origin binding"/>
    <property type="evidence" value="ECO:0007669"/>
    <property type="project" value="UniProtKB-UniRule"/>
</dbReference>
<dbReference type="GO" id="GO:0008289">
    <property type="term" value="F:lipid binding"/>
    <property type="evidence" value="ECO:0007669"/>
    <property type="project" value="UniProtKB-KW"/>
</dbReference>
<dbReference type="GO" id="GO:0006270">
    <property type="term" value="P:DNA replication initiation"/>
    <property type="evidence" value="ECO:0007669"/>
    <property type="project" value="UniProtKB-UniRule"/>
</dbReference>
<dbReference type="GO" id="GO:0006275">
    <property type="term" value="P:regulation of DNA replication"/>
    <property type="evidence" value="ECO:0007669"/>
    <property type="project" value="UniProtKB-UniRule"/>
</dbReference>
<dbReference type="CDD" id="cd00009">
    <property type="entry name" value="AAA"/>
    <property type="match status" value="1"/>
</dbReference>
<dbReference type="CDD" id="cd06571">
    <property type="entry name" value="Bac_DnaA_C"/>
    <property type="match status" value="1"/>
</dbReference>
<dbReference type="FunFam" id="1.10.1750.10:FF:000002">
    <property type="entry name" value="Chromosomal replication initiator protein DnaA"/>
    <property type="match status" value="1"/>
</dbReference>
<dbReference type="FunFam" id="1.10.8.60:FF:000003">
    <property type="entry name" value="Chromosomal replication initiator protein DnaA"/>
    <property type="match status" value="1"/>
</dbReference>
<dbReference type="FunFam" id="3.40.50.300:FF:000150">
    <property type="entry name" value="Chromosomal replication initiator protein DnaA"/>
    <property type="match status" value="1"/>
</dbReference>
<dbReference type="Gene3D" id="1.10.1750.10">
    <property type="match status" value="1"/>
</dbReference>
<dbReference type="Gene3D" id="1.10.8.60">
    <property type="match status" value="1"/>
</dbReference>
<dbReference type="Gene3D" id="3.40.50.300">
    <property type="entry name" value="P-loop containing nucleotide triphosphate hydrolases"/>
    <property type="match status" value="1"/>
</dbReference>
<dbReference type="HAMAP" id="MF_00377">
    <property type="entry name" value="DnaA_bact"/>
    <property type="match status" value="1"/>
</dbReference>
<dbReference type="InterPro" id="IPR003593">
    <property type="entry name" value="AAA+_ATPase"/>
</dbReference>
<dbReference type="InterPro" id="IPR001957">
    <property type="entry name" value="Chromosome_initiator_DnaA"/>
</dbReference>
<dbReference type="InterPro" id="IPR020591">
    <property type="entry name" value="Chromosome_initiator_DnaA-like"/>
</dbReference>
<dbReference type="InterPro" id="IPR018312">
    <property type="entry name" value="Chromosome_initiator_DnaA_CS"/>
</dbReference>
<dbReference type="InterPro" id="IPR013159">
    <property type="entry name" value="DnaA_C"/>
</dbReference>
<dbReference type="InterPro" id="IPR013317">
    <property type="entry name" value="DnaA_dom"/>
</dbReference>
<dbReference type="InterPro" id="IPR027417">
    <property type="entry name" value="P-loop_NTPase"/>
</dbReference>
<dbReference type="InterPro" id="IPR010921">
    <property type="entry name" value="Trp_repressor/repl_initiator"/>
</dbReference>
<dbReference type="NCBIfam" id="TIGR00362">
    <property type="entry name" value="DnaA"/>
    <property type="match status" value="1"/>
</dbReference>
<dbReference type="NCBIfam" id="NF010686">
    <property type="entry name" value="PRK14086.1"/>
    <property type="match status" value="1"/>
</dbReference>
<dbReference type="PANTHER" id="PTHR30050">
    <property type="entry name" value="CHROMOSOMAL REPLICATION INITIATOR PROTEIN DNAA"/>
    <property type="match status" value="1"/>
</dbReference>
<dbReference type="PANTHER" id="PTHR30050:SF2">
    <property type="entry name" value="CHROMOSOMAL REPLICATION INITIATOR PROTEIN DNAA"/>
    <property type="match status" value="1"/>
</dbReference>
<dbReference type="Pfam" id="PF00308">
    <property type="entry name" value="Bac_DnaA"/>
    <property type="match status" value="1"/>
</dbReference>
<dbReference type="Pfam" id="PF08299">
    <property type="entry name" value="Bac_DnaA_C"/>
    <property type="match status" value="1"/>
</dbReference>
<dbReference type="PRINTS" id="PR00051">
    <property type="entry name" value="DNAA"/>
</dbReference>
<dbReference type="SMART" id="SM00382">
    <property type="entry name" value="AAA"/>
    <property type="match status" value="1"/>
</dbReference>
<dbReference type="SMART" id="SM00760">
    <property type="entry name" value="Bac_DnaA_C"/>
    <property type="match status" value="1"/>
</dbReference>
<dbReference type="SUPFAM" id="SSF52540">
    <property type="entry name" value="P-loop containing nucleoside triphosphate hydrolases"/>
    <property type="match status" value="1"/>
</dbReference>
<dbReference type="SUPFAM" id="SSF48295">
    <property type="entry name" value="TrpR-like"/>
    <property type="match status" value="1"/>
</dbReference>
<dbReference type="PROSITE" id="PS01008">
    <property type="entry name" value="DNAA"/>
    <property type="match status" value="1"/>
</dbReference>
<name>DNAA_NOCFA</name>
<reference key="1">
    <citation type="journal article" date="2004" name="Proc. Natl. Acad. Sci. U.S.A.">
        <title>The complete genomic sequence of Nocardia farcinica IFM 10152.</title>
        <authorList>
            <person name="Ishikawa J."/>
            <person name="Yamashita A."/>
            <person name="Mikami Y."/>
            <person name="Hoshino Y."/>
            <person name="Kurita H."/>
            <person name="Hotta K."/>
            <person name="Shiba T."/>
            <person name="Hattori M."/>
        </authorList>
    </citation>
    <scope>NUCLEOTIDE SEQUENCE [LARGE SCALE GENOMIC DNA]</scope>
    <source>
        <strain>IFM 10152</strain>
    </source>
</reference>
<evidence type="ECO:0000255" key="1">
    <source>
        <dbReference type="HAMAP-Rule" id="MF_00377"/>
    </source>
</evidence>
<evidence type="ECO:0000256" key="2">
    <source>
        <dbReference type="SAM" id="MobiDB-lite"/>
    </source>
</evidence>